<gene>
    <name type="primary">spoT</name>
    <name type="ordered locus">MPN_397</name>
    <name type="ORF">MP441</name>
</gene>
<keyword id="KW-0378">Hydrolase</keyword>
<keyword id="KW-0464">Manganese</keyword>
<keyword id="KW-1185">Reference proteome</keyword>
<feature type="chain" id="PRO_0000166573" description="Probable guanosine-3',5'-bis(diphosphate) 3'-pyrophosphohydrolase">
    <location>
        <begin position="1"/>
        <end position="733"/>
    </location>
</feature>
<feature type="domain" description="HD" evidence="2">
    <location>
        <begin position="62"/>
        <end position="167"/>
    </location>
</feature>
<dbReference type="EC" id="3.1.7.2"/>
<dbReference type="EMBL" id="U00089">
    <property type="protein sequence ID" value="AAB96089.1"/>
    <property type="molecule type" value="Genomic_DNA"/>
</dbReference>
<dbReference type="PIR" id="S73767">
    <property type="entry name" value="S73767"/>
</dbReference>
<dbReference type="RefSeq" id="NP_110085.1">
    <property type="nucleotide sequence ID" value="NC_000912.1"/>
</dbReference>
<dbReference type="RefSeq" id="WP_010874753.1">
    <property type="nucleotide sequence ID" value="NC_000912.1"/>
</dbReference>
<dbReference type="SMR" id="P75386"/>
<dbReference type="IntAct" id="P75386">
    <property type="interactions" value="4"/>
</dbReference>
<dbReference type="STRING" id="272634.MPN_397"/>
<dbReference type="EnsemblBacteria" id="AAB96089">
    <property type="protein sequence ID" value="AAB96089"/>
    <property type="gene ID" value="MPN_397"/>
</dbReference>
<dbReference type="KEGG" id="mpn:MPN_397"/>
<dbReference type="PATRIC" id="fig|272634.6.peg.428"/>
<dbReference type="HOGENOM" id="CLU_012300_0_0_14"/>
<dbReference type="OrthoDB" id="9805041at2"/>
<dbReference type="BioCyc" id="MPNE272634:G1GJ3-630-MONOMER"/>
<dbReference type="UniPathway" id="UPA00908">
    <property type="reaction ID" value="UER00886"/>
</dbReference>
<dbReference type="Proteomes" id="UP000000808">
    <property type="component" value="Chromosome"/>
</dbReference>
<dbReference type="GO" id="GO:0005886">
    <property type="term" value="C:plasma membrane"/>
    <property type="evidence" value="ECO:0007669"/>
    <property type="project" value="TreeGrafter"/>
</dbReference>
<dbReference type="GO" id="GO:0008893">
    <property type="term" value="F:guanosine-3',5'-bis(diphosphate) 3'-diphosphatase activity"/>
    <property type="evidence" value="ECO:0007669"/>
    <property type="project" value="UniProtKB-EC"/>
</dbReference>
<dbReference type="GO" id="GO:0015970">
    <property type="term" value="P:guanosine tetraphosphate biosynthetic process"/>
    <property type="evidence" value="ECO:0007669"/>
    <property type="project" value="UniProtKB-UniPathway"/>
</dbReference>
<dbReference type="CDD" id="cd00077">
    <property type="entry name" value="HDc"/>
    <property type="match status" value="1"/>
</dbReference>
<dbReference type="CDD" id="cd05399">
    <property type="entry name" value="NT_Rel-Spo_like"/>
    <property type="match status" value="1"/>
</dbReference>
<dbReference type="Gene3D" id="3.30.460.10">
    <property type="entry name" value="Beta Polymerase, domain 2"/>
    <property type="match status" value="1"/>
</dbReference>
<dbReference type="Gene3D" id="1.10.3210.10">
    <property type="entry name" value="Hypothetical protein af1432"/>
    <property type="match status" value="1"/>
</dbReference>
<dbReference type="InterPro" id="IPR003607">
    <property type="entry name" value="HD/PDEase_dom"/>
</dbReference>
<dbReference type="InterPro" id="IPR006674">
    <property type="entry name" value="HD_domain"/>
</dbReference>
<dbReference type="InterPro" id="IPR043519">
    <property type="entry name" value="NT_sf"/>
</dbReference>
<dbReference type="InterPro" id="IPR004811">
    <property type="entry name" value="RelA/Spo_fam"/>
</dbReference>
<dbReference type="InterPro" id="IPR007685">
    <property type="entry name" value="RelA_SpoT"/>
</dbReference>
<dbReference type="NCBIfam" id="TIGR00691">
    <property type="entry name" value="spoT_relA"/>
    <property type="match status" value="1"/>
</dbReference>
<dbReference type="PANTHER" id="PTHR21262:SF31">
    <property type="entry name" value="GTP PYROPHOSPHOKINASE"/>
    <property type="match status" value="1"/>
</dbReference>
<dbReference type="PANTHER" id="PTHR21262">
    <property type="entry name" value="GUANOSINE-3',5'-BIS DIPHOSPHATE 3'-PYROPHOSPHOHYDROLASE"/>
    <property type="match status" value="1"/>
</dbReference>
<dbReference type="Pfam" id="PF13328">
    <property type="entry name" value="HD_4"/>
    <property type="match status" value="1"/>
</dbReference>
<dbReference type="Pfam" id="PF04607">
    <property type="entry name" value="RelA_SpoT"/>
    <property type="match status" value="1"/>
</dbReference>
<dbReference type="SMART" id="SM00471">
    <property type="entry name" value="HDc"/>
    <property type="match status" value="1"/>
</dbReference>
<dbReference type="SMART" id="SM00954">
    <property type="entry name" value="RelA_SpoT"/>
    <property type="match status" value="1"/>
</dbReference>
<dbReference type="SUPFAM" id="SSF109604">
    <property type="entry name" value="HD-domain/PDEase-like"/>
    <property type="match status" value="1"/>
</dbReference>
<dbReference type="SUPFAM" id="SSF81301">
    <property type="entry name" value="Nucleotidyltransferase"/>
    <property type="match status" value="1"/>
</dbReference>
<dbReference type="PROSITE" id="PS51831">
    <property type="entry name" value="HD"/>
    <property type="match status" value="1"/>
</dbReference>
<proteinExistence type="inferred from homology"/>
<sequence>MFYNWLKLYKFSKMATLVEIERDFLQKTAQKFAPEVVALITKALDYSKKWHGEQKRLSGEPFFIHPLRTALRLVEWNMDSNTVCAGLLHDIIEDTQVTEADLTAIFGKEITDLVVKVTKITSESKKQRQLNRKKEDLNLKSLVNIAMSSQQEVNALVLKLADRLDNISSIEFLAVEKQKIIAKETLELYAKIAGRIGMYPVKTQLADLSFKVLDPKNFNNTLSKINQQKVFYDNEWGNFKKQLEEMLEQNQIEYRLESRIKGIYSTYQKLTFHEQNIAKIHDLFAIRLIVKSELDCYHLLGLIHLNFTVLMKHFKDYIASPKQNFYQSIHTTVRLKGLNVEIQIRTQRMDHVSKYGFASHWIYKEKKEGLLASALQVNYLNSKQMHSRDFFKRIFGTDIIKVNVSSDNEPNIVKKLNVESNSKLLDIAYELYPKQFNKLEKIKLDGVEVMSFDVTAENEMVIEFCFGKTNNLKRRWLRYMNNHVFRERVKKDLNKLKKAVKYSELPLYEKALEELHLKLADETQIKQRLNALGIKKLTEFLELIEYPHFPKNEHLYFLASNNQKWRELIKPIKFALSQAVFQNSYFEQIEGIYITKIVIETCCTKIPDMPEQVIGILMKNILRVHLHDCRELANQKQPKIIPLYWNAHQLKMRPRKFRCQINIRGVWSETTVNKIVQTIIEGDSYLERIIPKIDKQKDEFELNITMFIDNYHQLITIMEQITTKNISYVWKYL</sequence>
<reference key="1">
    <citation type="journal article" date="1996" name="Nucleic Acids Res.">
        <title>Complete sequence analysis of the genome of the bacterium Mycoplasma pneumoniae.</title>
        <authorList>
            <person name="Himmelreich R."/>
            <person name="Hilbert H."/>
            <person name="Plagens H."/>
            <person name="Pirkl E."/>
            <person name="Li B.-C."/>
            <person name="Herrmann R."/>
        </authorList>
    </citation>
    <scope>NUCLEOTIDE SEQUENCE [LARGE SCALE GENOMIC DNA]</scope>
    <source>
        <strain>ATCC 29342 / M129 / Subtype 1</strain>
    </source>
</reference>
<comment type="function">
    <text evidence="1">In eubacteria ppGpp (guanosine 3'-diphosphate 5'-diphosphate) is a mediator of the stringent response that coordinates a variety of cellular activities in response to changes in nutritional abundance. This enzyme catalyzes the degradation of ppGpp into GDP. It may also be capable of catalyzing the synthesis of ppGpp (By similarity).</text>
</comment>
<comment type="catalytic activity">
    <reaction>
        <text>guanosine 3',5'-bis(diphosphate) + H2O = GDP + diphosphate + H(+)</text>
        <dbReference type="Rhea" id="RHEA:14253"/>
        <dbReference type="ChEBI" id="CHEBI:15377"/>
        <dbReference type="ChEBI" id="CHEBI:15378"/>
        <dbReference type="ChEBI" id="CHEBI:33019"/>
        <dbReference type="ChEBI" id="CHEBI:58189"/>
        <dbReference type="ChEBI" id="CHEBI:77828"/>
        <dbReference type="EC" id="3.1.7.2"/>
    </reaction>
</comment>
<comment type="cofactor">
    <cofactor evidence="1">
        <name>Mn(2+)</name>
        <dbReference type="ChEBI" id="CHEBI:29035"/>
    </cofactor>
</comment>
<comment type="pathway">
    <text>Purine metabolism; ppGpp biosynthesis; ppGpp from GDP: step 1/1.</text>
</comment>
<comment type="similarity">
    <text evidence="3">Belongs to the RelA/SpoT family.</text>
</comment>
<evidence type="ECO:0000250" key="1"/>
<evidence type="ECO:0000255" key="2">
    <source>
        <dbReference type="PROSITE-ProRule" id="PRU01175"/>
    </source>
</evidence>
<evidence type="ECO:0000305" key="3"/>
<name>SPOT_MYCPN</name>
<organism>
    <name type="scientific">Mycoplasma pneumoniae (strain ATCC 29342 / M129 / Subtype 1)</name>
    <name type="common">Mycoplasmoides pneumoniae</name>
    <dbReference type="NCBI Taxonomy" id="272634"/>
    <lineage>
        <taxon>Bacteria</taxon>
        <taxon>Bacillati</taxon>
        <taxon>Mycoplasmatota</taxon>
        <taxon>Mycoplasmoidales</taxon>
        <taxon>Mycoplasmoidaceae</taxon>
        <taxon>Mycoplasmoides</taxon>
    </lineage>
</organism>
<accession>P75386</accession>
<protein>
    <recommendedName>
        <fullName>Probable guanosine-3',5'-bis(diphosphate) 3'-pyrophosphohydrolase</fullName>
        <ecNumber>3.1.7.2</ecNumber>
    </recommendedName>
    <alternativeName>
        <fullName>Penta-phosphate guanosine-3'-pyrophosphohydrolase</fullName>
        <shortName>(ppGpp)ase</shortName>
    </alternativeName>
</protein>